<keyword id="KW-0025">Alternative splicing</keyword>
<keyword id="KW-0106">Calcium</keyword>
<keyword id="KW-0130">Cell adhesion</keyword>
<keyword id="KW-1003">Cell membrane</keyword>
<keyword id="KW-0325">Glycoprotein</keyword>
<keyword id="KW-0472">Membrane</keyword>
<keyword id="KW-1267">Proteomics identification</keyword>
<keyword id="KW-1185">Reference proteome</keyword>
<keyword id="KW-0677">Repeat</keyword>
<keyword id="KW-0732">Signal</keyword>
<keyword id="KW-0812">Transmembrane</keyword>
<keyword id="KW-1133">Transmembrane helix</keyword>
<comment type="function">
    <text>Potential calcium-dependent cell-adhesion protein. May be involved in the establishment and maintenance of specific neuronal connections in the brain.</text>
</comment>
<comment type="interaction">
    <interactant intactId="EBI-12546446">
        <id>Q9Y5G4</id>
    </interactant>
    <interactant intactId="EBI-48413530">
        <id>Q9Y5H0</id>
        <label>PCDHGA3</label>
    </interactant>
    <organismsDiffer>false</organismsDiffer>
    <experiments>2</experiments>
</comment>
<comment type="interaction">
    <interactant intactId="EBI-12202741">
        <id>Q9Y5G4-2</id>
    </interactant>
    <interactant intactId="EBI-947187">
        <id>Q9UHD9</id>
        <label>UBQLN2</label>
    </interactant>
    <organismsDiffer>false</organismsDiffer>
    <experiments>3</experiments>
</comment>
<comment type="subcellular location">
    <subcellularLocation>
        <location evidence="1">Cell membrane</location>
        <topology evidence="1">Single-pass type I membrane protein</topology>
    </subcellularLocation>
</comment>
<comment type="alternative products">
    <event type="alternative splicing"/>
    <isoform>
        <id>Q9Y5G4-1</id>
        <name>1</name>
        <sequence type="displayed"/>
    </isoform>
    <isoform>
        <id>Q9Y5G4-2</id>
        <name>2</name>
        <name>Short</name>
        <sequence type="described" ref="VSP_008675 VSP_008676"/>
    </isoform>
</comment>
<accession>Q9Y5G4</accession>
<accession>A2RU65</accession>
<accession>Q9Y5C9</accession>
<evidence type="ECO:0000250" key="1"/>
<evidence type="ECO:0000255" key="2"/>
<evidence type="ECO:0000255" key="3">
    <source>
        <dbReference type="PROSITE-ProRule" id="PRU00043"/>
    </source>
</evidence>
<evidence type="ECO:0000256" key="4">
    <source>
        <dbReference type="SAM" id="MobiDB-lite"/>
    </source>
</evidence>
<evidence type="ECO:0000303" key="5">
    <source>
    </source>
</evidence>
<evidence type="ECO:0000303" key="6">
    <source>
    </source>
</evidence>
<proteinExistence type="evidence at protein level"/>
<dbReference type="EMBL" id="AF152329">
    <property type="protein sequence ID" value="AAD43723.1"/>
    <property type="molecule type" value="mRNA"/>
</dbReference>
<dbReference type="EMBL" id="AF152516">
    <property type="protein sequence ID" value="AAD43776.1"/>
    <property type="molecule type" value="mRNA"/>
</dbReference>
<dbReference type="EMBL" id="CH471062">
    <property type="protein sequence ID" value="EAW61958.1"/>
    <property type="molecule type" value="Genomic_DNA"/>
</dbReference>
<dbReference type="EMBL" id="BC132769">
    <property type="protein sequence ID" value="AAI32770.1"/>
    <property type="molecule type" value="mRNA"/>
</dbReference>
<dbReference type="CCDS" id="CCDS58981.1">
    <molecule id="Q9Y5G4-1"/>
</dbReference>
<dbReference type="CCDS" id="CCDS75341.1">
    <molecule id="Q9Y5G4-2"/>
</dbReference>
<dbReference type="RefSeq" id="NP_061744.1">
    <molecule id="Q9Y5G4-1"/>
    <property type="nucleotide sequence ID" value="NM_018921.3"/>
</dbReference>
<dbReference type="RefSeq" id="NP_114478.1">
    <molecule id="Q9Y5G4-2"/>
    <property type="nucleotide sequence ID" value="NM_032089.2"/>
</dbReference>
<dbReference type="SMR" id="Q9Y5G4"/>
<dbReference type="BioGRID" id="121047">
    <property type="interactions" value="33"/>
</dbReference>
<dbReference type="FunCoup" id="Q9Y5G4">
    <property type="interactions" value="108"/>
</dbReference>
<dbReference type="IntAct" id="Q9Y5G4">
    <property type="interactions" value="33"/>
</dbReference>
<dbReference type="MINT" id="Q9Y5G4"/>
<dbReference type="STRING" id="9606.ENSP00000460274"/>
<dbReference type="GlyCosmos" id="Q9Y5G4">
    <property type="glycosylation" value="5 sites, No reported glycans"/>
</dbReference>
<dbReference type="GlyGen" id="Q9Y5G4">
    <property type="glycosylation" value="5 sites"/>
</dbReference>
<dbReference type="iPTMnet" id="Q9Y5G4"/>
<dbReference type="PhosphoSitePlus" id="Q9Y5G4"/>
<dbReference type="BioMuta" id="PCDHGA9"/>
<dbReference type="DMDM" id="37999834"/>
<dbReference type="jPOST" id="Q9Y5G4"/>
<dbReference type="MassIVE" id="Q9Y5G4"/>
<dbReference type="PaxDb" id="9606-ENSP00000460274"/>
<dbReference type="PeptideAtlas" id="Q9Y5G4"/>
<dbReference type="ProteomicsDB" id="86369">
    <molecule id="Q9Y5G4-1"/>
</dbReference>
<dbReference type="ProteomicsDB" id="86370">
    <molecule id="Q9Y5G4-2"/>
</dbReference>
<dbReference type="Antibodypedia" id="60171">
    <property type="antibodies" value="46 antibodies from 9 providers"/>
</dbReference>
<dbReference type="DNASU" id="56107"/>
<dbReference type="Ensembl" id="ENST00000573521.2">
    <molecule id="Q9Y5G4-1"/>
    <property type="protein sequence ID" value="ENSP00000460274.1"/>
    <property type="gene ID" value="ENSG00000261934.3"/>
</dbReference>
<dbReference type="Ensembl" id="ENST00000616887.1">
    <molecule id="Q9Y5G4-2"/>
    <property type="protein sequence ID" value="ENSP00000480862.1"/>
    <property type="gene ID" value="ENSG00000261934.3"/>
</dbReference>
<dbReference type="GeneID" id="56107"/>
<dbReference type="KEGG" id="hsa:56107"/>
<dbReference type="MANE-Select" id="ENST00000573521.2">
    <property type="protein sequence ID" value="ENSP00000460274.1"/>
    <property type="RefSeq nucleotide sequence ID" value="NM_018921.3"/>
    <property type="RefSeq protein sequence ID" value="NP_061744.1"/>
</dbReference>
<dbReference type="UCSC" id="uc003lkh.3">
    <molecule id="Q9Y5G4-1"/>
    <property type="organism name" value="human"/>
</dbReference>
<dbReference type="AGR" id="HGNC:8707"/>
<dbReference type="CTD" id="56107"/>
<dbReference type="DisGeNET" id="56107"/>
<dbReference type="GeneCards" id="PCDHGA9"/>
<dbReference type="HGNC" id="HGNC:8707">
    <property type="gene designation" value="PCDHGA9"/>
</dbReference>
<dbReference type="HPA" id="ENSG00000261934">
    <property type="expression patterns" value="Low tissue specificity"/>
</dbReference>
<dbReference type="MalaCards" id="PCDHGA9"/>
<dbReference type="MIM" id="604968">
    <property type="type" value="gene"/>
</dbReference>
<dbReference type="MIM" id="606296">
    <property type="type" value="gene"/>
</dbReference>
<dbReference type="neXtProt" id="NX_Q9Y5G4"/>
<dbReference type="PharmGKB" id="PA33055"/>
<dbReference type="VEuPathDB" id="HostDB:ENSG00000261934"/>
<dbReference type="eggNOG" id="KOG3594">
    <property type="taxonomic scope" value="Eukaryota"/>
</dbReference>
<dbReference type="GeneTree" id="ENSGT00940000165392"/>
<dbReference type="HOGENOM" id="CLU_006480_3_0_1"/>
<dbReference type="InParanoid" id="Q9Y5G4"/>
<dbReference type="OMA" id="DTCEIKD"/>
<dbReference type="OrthoDB" id="6252479at2759"/>
<dbReference type="PAN-GO" id="Q9Y5G4">
    <property type="GO annotations" value="2 GO annotations based on evolutionary models"/>
</dbReference>
<dbReference type="PhylomeDB" id="Q9Y5G4"/>
<dbReference type="TreeFam" id="TF332299"/>
<dbReference type="PathwayCommons" id="Q9Y5G4"/>
<dbReference type="SignaLink" id="Q9Y5G4"/>
<dbReference type="SIGNOR" id="Q9Y5G4"/>
<dbReference type="BioGRID-ORCS" id="56107">
    <property type="hits" value="7 hits in 1093 CRISPR screens"/>
</dbReference>
<dbReference type="GenomeRNAi" id="56107"/>
<dbReference type="Pharos" id="Q9Y5G4">
    <property type="development level" value="Tdark"/>
</dbReference>
<dbReference type="PRO" id="PR:Q9Y5G4"/>
<dbReference type="Proteomes" id="UP000005640">
    <property type="component" value="Chromosome 5"/>
</dbReference>
<dbReference type="RNAct" id="Q9Y5G4">
    <property type="molecule type" value="protein"/>
</dbReference>
<dbReference type="Bgee" id="ENSG00000261934">
    <property type="expression patterns" value="Expressed in stromal cell of endometrium and 99 other cell types or tissues"/>
</dbReference>
<dbReference type="GO" id="GO:0005886">
    <property type="term" value="C:plasma membrane"/>
    <property type="evidence" value="ECO:0000318"/>
    <property type="project" value="GO_Central"/>
</dbReference>
<dbReference type="GO" id="GO:0005509">
    <property type="term" value="F:calcium ion binding"/>
    <property type="evidence" value="ECO:0007669"/>
    <property type="project" value="InterPro"/>
</dbReference>
<dbReference type="GO" id="GO:0003723">
    <property type="term" value="F:RNA binding"/>
    <property type="evidence" value="ECO:0007005"/>
    <property type="project" value="UniProtKB"/>
</dbReference>
<dbReference type="GO" id="GO:0007155">
    <property type="term" value="P:cell adhesion"/>
    <property type="evidence" value="ECO:0000318"/>
    <property type="project" value="GO_Central"/>
</dbReference>
<dbReference type="GO" id="GO:0007156">
    <property type="term" value="P:homophilic cell adhesion via plasma membrane adhesion molecules"/>
    <property type="evidence" value="ECO:0007669"/>
    <property type="project" value="InterPro"/>
</dbReference>
<dbReference type="GO" id="GO:0007399">
    <property type="term" value="P:nervous system development"/>
    <property type="evidence" value="ECO:0007669"/>
    <property type="project" value="UniProtKB-ARBA"/>
</dbReference>
<dbReference type="CDD" id="cd11304">
    <property type="entry name" value="Cadherin_repeat"/>
    <property type="match status" value="6"/>
</dbReference>
<dbReference type="FunFam" id="2.60.40.60:FF:000004">
    <property type="entry name" value="Protocadherin 1 gamma 2"/>
    <property type="match status" value="1"/>
</dbReference>
<dbReference type="FunFam" id="2.60.40.60:FF:000001">
    <property type="entry name" value="Protocadherin alpha 2"/>
    <property type="match status" value="1"/>
</dbReference>
<dbReference type="FunFam" id="2.60.40.60:FF:000002">
    <property type="entry name" value="Protocadherin alpha 2"/>
    <property type="match status" value="1"/>
</dbReference>
<dbReference type="FunFam" id="2.60.40.60:FF:000006">
    <property type="entry name" value="Protocadherin alpha 2"/>
    <property type="match status" value="1"/>
</dbReference>
<dbReference type="FunFam" id="2.60.40.60:FF:000129">
    <property type="entry name" value="protocadherin alpha-C2 isoform X1"/>
    <property type="match status" value="1"/>
</dbReference>
<dbReference type="FunFam" id="2.60.40.60:FF:000018">
    <property type="entry name" value="Protocadherin gamma c3"/>
    <property type="match status" value="1"/>
</dbReference>
<dbReference type="Gene3D" id="2.60.40.60">
    <property type="entry name" value="Cadherins"/>
    <property type="match status" value="6"/>
</dbReference>
<dbReference type="InterPro" id="IPR002126">
    <property type="entry name" value="Cadherin-like_dom"/>
</dbReference>
<dbReference type="InterPro" id="IPR015919">
    <property type="entry name" value="Cadherin-like_sf"/>
</dbReference>
<dbReference type="InterPro" id="IPR032455">
    <property type="entry name" value="Cadherin_C"/>
</dbReference>
<dbReference type="InterPro" id="IPR031904">
    <property type="entry name" value="Cadherin_CBD"/>
</dbReference>
<dbReference type="InterPro" id="IPR020894">
    <property type="entry name" value="Cadherin_CS"/>
</dbReference>
<dbReference type="InterPro" id="IPR013164">
    <property type="entry name" value="Cadherin_N"/>
</dbReference>
<dbReference type="InterPro" id="IPR050174">
    <property type="entry name" value="Protocadherin/Cadherin-CA"/>
</dbReference>
<dbReference type="PANTHER" id="PTHR24028">
    <property type="entry name" value="CADHERIN-87A"/>
    <property type="match status" value="1"/>
</dbReference>
<dbReference type="PANTHER" id="PTHR24028:SF86">
    <property type="entry name" value="PROTOCADHERIN GAMMA-A9"/>
    <property type="match status" value="1"/>
</dbReference>
<dbReference type="Pfam" id="PF00028">
    <property type="entry name" value="Cadherin"/>
    <property type="match status" value="5"/>
</dbReference>
<dbReference type="Pfam" id="PF08266">
    <property type="entry name" value="Cadherin_2"/>
    <property type="match status" value="1"/>
</dbReference>
<dbReference type="Pfam" id="PF16492">
    <property type="entry name" value="Cadherin_C_2"/>
    <property type="match status" value="1"/>
</dbReference>
<dbReference type="Pfam" id="PF15974">
    <property type="entry name" value="Cadherin_tail"/>
    <property type="match status" value="1"/>
</dbReference>
<dbReference type="PRINTS" id="PR00205">
    <property type="entry name" value="CADHERIN"/>
</dbReference>
<dbReference type="SMART" id="SM00112">
    <property type="entry name" value="CA"/>
    <property type="match status" value="6"/>
</dbReference>
<dbReference type="SUPFAM" id="SSF49313">
    <property type="entry name" value="Cadherin-like"/>
    <property type="match status" value="6"/>
</dbReference>
<dbReference type="PROSITE" id="PS00232">
    <property type="entry name" value="CADHERIN_1"/>
    <property type="match status" value="4"/>
</dbReference>
<dbReference type="PROSITE" id="PS50268">
    <property type="entry name" value="CADHERIN_2"/>
    <property type="match status" value="6"/>
</dbReference>
<sequence length="932" mass="101687">MAAPTKCQLRGRLVLLCSLLGMLWEARASQIRYSVPEETEKGYIVGNISKDLALEPRELAERRVRIVSRGRTQLFSLNPRSGTLVTAGRIDREELCAQSPRCLVNFKVLVEDRVKLYGIEIEVTDINDSAPKFQAESLEVKINEIAVPGARYPLPEAIDPDVGVNSLQSYQLSPNHHFSLNVQTGDNGAINPELVLERALDREEATAHHLVLTASDGGEPRRSSTVRIHVTVLDTNDNAPVFAQRIYRVKVLENVPPGTWLLTATASDLDEGINGKVAYKFWKINEKQSLLFQLNENTGEISTAKSLDYEECSFYEMEIQAEDGGGLKGWTKVLISVEDVNDNRPEVTITSLFSPVREDAPQGTVILLFNAHDRDSGKNGQVVCSIQENLSFTLENSEEDYYRLLTAQILDREKASEYNITVTATDRGTPPLSTEIHITLQVTDINDNPPAFSQASYSVYLPENNARGTSIFSVIAYDPDSNENSRVIYSLAEDTIQGSPLSTYVSINSDTGVLYALCSFDYEQFRDLQMQVTASDSGSPPLSSNVSLRLFVLDQNDNAPEILYPALPTDGSTGVELAPRSAEPGYLVTKVVAVDRDSGQNAWLSYRLFKASEPGLFSVGLHTGEVRTARALLDRDALKQSLVVAVQDHGQPPLSATVTLTVAIADSIPDILADLGSLQIPADLEASDLTLYLVVAVAVVSCVFLTFVITLLALRLRHWHSSHLLRATSDGLAGVPTSHFVGVDGVRAFLQTYSQEFSLTADSRKSHLIFPQPNYADTLISQQSCEKNEPLCVSVDSKFPIEDTPLVPQAPPNTDWRFSQAQRPGTSGSQNGDDTGTWPNNQFDTEMLQAMILASASEAADGSSTLGGGAGTMGLSARYGPQFTLQHVPDYRQNVYIPGSNATLTNAAGKRDGKAPAGGNGNKKKSGKKEKK</sequence>
<reference key="1">
    <citation type="journal article" date="1999" name="Cell">
        <title>A striking organization of a large family of human neural cadherin-like cell adhesion genes.</title>
        <authorList>
            <person name="Wu Q."/>
            <person name="Maniatis T."/>
        </authorList>
    </citation>
    <scope>NUCLEOTIDE SEQUENCE [MRNA] (ISOFORMS 1 AND 2)</scope>
    <source>
        <tissue>Brain</tissue>
    </source>
</reference>
<reference key="2">
    <citation type="submission" date="2005-09" db="EMBL/GenBank/DDBJ databases">
        <authorList>
            <person name="Mural R.J."/>
            <person name="Istrail S."/>
            <person name="Sutton G.G."/>
            <person name="Florea L."/>
            <person name="Halpern A.L."/>
            <person name="Mobarry C.M."/>
            <person name="Lippert R."/>
            <person name="Walenz B."/>
            <person name="Shatkay H."/>
            <person name="Dew I."/>
            <person name="Miller J.R."/>
            <person name="Flanigan M.J."/>
            <person name="Edwards N.J."/>
            <person name="Bolanos R."/>
            <person name="Fasulo D."/>
            <person name="Halldorsson B.V."/>
            <person name="Hannenhalli S."/>
            <person name="Turner R."/>
            <person name="Yooseph S."/>
            <person name="Lu F."/>
            <person name="Nusskern D.R."/>
            <person name="Shue B.C."/>
            <person name="Zheng X.H."/>
            <person name="Zhong F."/>
            <person name="Delcher A.L."/>
            <person name="Huson D.H."/>
            <person name="Kravitz S.A."/>
            <person name="Mouchard L."/>
            <person name="Reinert K."/>
            <person name="Remington K.A."/>
            <person name="Clark A.G."/>
            <person name="Waterman M.S."/>
            <person name="Eichler E.E."/>
            <person name="Adams M.D."/>
            <person name="Hunkapiller M.W."/>
            <person name="Myers E.W."/>
            <person name="Venter J.C."/>
        </authorList>
    </citation>
    <scope>NUCLEOTIDE SEQUENCE [LARGE SCALE GENOMIC DNA]</scope>
</reference>
<reference key="3">
    <citation type="journal article" date="2004" name="Genome Res.">
        <title>The status, quality, and expansion of the NIH full-length cDNA project: the Mammalian Gene Collection (MGC).</title>
        <authorList>
            <consortium name="The MGC Project Team"/>
        </authorList>
    </citation>
    <scope>NUCLEOTIDE SEQUENCE [LARGE SCALE MRNA] (ISOFORM 2)</scope>
    <source>
        <tissue>Brain</tissue>
    </source>
</reference>
<protein>
    <recommendedName>
        <fullName>Protocadherin gamma-A9</fullName>
        <shortName>PCDH-gamma-A9</shortName>
    </recommendedName>
</protein>
<organism>
    <name type="scientific">Homo sapiens</name>
    <name type="common">Human</name>
    <dbReference type="NCBI Taxonomy" id="9606"/>
    <lineage>
        <taxon>Eukaryota</taxon>
        <taxon>Metazoa</taxon>
        <taxon>Chordata</taxon>
        <taxon>Craniata</taxon>
        <taxon>Vertebrata</taxon>
        <taxon>Euteleostomi</taxon>
        <taxon>Mammalia</taxon>
        <taxon>Eutheria</taxon>
        <taxon>Euarchontoglires</taxon>
        <taxon>Primates</taxon>
        <taxon>Haplorrhini</taxon>
        <taxon>Catarrhini</taxon>
        <taxon>Hominidae</taxon>
        <taxon>Homo</taxon>
    </lineage>
</organism>
<feature type="signal peptide" evidence="2">
    <location>
        <begin position="1"/>
        <end position="28"/>
    </location>
</feature>
<feature type="chain" id="PRO_0000003964" description="Protocadherin gamma-A9">
    <location>
        <begin position="29"/>
        <end position="932"/>
    </location>
</feature>
<feature type="topological domain" description="Extracellular" evidence="2">
    <location>
        <begin position="29"/>
        <end position="692"/>
    </location>
</feature>
<feature type="transmembrane region" description="Helical" evidence="2">
    <location>
        <begin position="693"/>
        <end position="713"/>
    </location>
</feature>
<feature type="topological domain" description="Cytoplasmic" evidence="2">
    <location>
        <begin position="714"/>
        <end position="932"/>
    </location>
</feature>
<feature type="domain" description="Cadherin 1" evidence="3">
    <location>
        <begin position="29"/>
        <end position="133"/>
    </location>
</feature>
<feature type="domain" description="Cadherin 2" evidence="3">
    <location>
        <begin position="134"/>
        <end position="242"/>
    </location>
</feature>
<feature type="domain" description="Cadherin 3" evidence="3">
    <location>
        <begin position="243"/>
        <end position="347"/>
    </location>
</feature>
<feature type="domain" description="Cadherin 4" evidence="3">
    <location>
        <begin position="348"/>
        <end position="452"/>
    </location>
</feature>
<feature type="domain" description="Cadherin 5" evidence="3">
    <location>
        <begin position="453"/>
        <end position="562"/>
    </location>
</feature>
<feature type="domain" description="Cadherin 6" evidence="3">
    <location>
        <begin position="570"/>
        <end position="683"/>
    </location>
</feature>
<feature type="region of interest" description="Disordered" evidence="4">
    <location>
        <begin position="803"/>
        <end position="841"/>
    </location>
</feature>
<feature type="region of interest" description="Disordered" evidence="4">
    <location>
        <begin position="902"/>
        <end position="932"/>
    </location>
</feature>
<feature type="compositionally biased region" description="Polar residues" evidence="4">
    <location>
        <begin position="816"/>
        <end position="841"/>
    </location>
</feature>
<feature type="compositionally biased region" description="Basic residues" evidence="4">
    <location>
        <begin position="922"/>
        <end position="932"/>
    </location>
</feature>
<feature type="glycosylation site" description="N-linked (GlcNAc...) asparagine" evidence="2">
    <location>
        <position position="47"/>
    </location>
</feature>
<feature type="glycosylation site" description="N-linked (GlcNAc...) asparagine" evidence="2">
    <location>
        <position position="127"/>
    </location>
</feature>
<feature type="glycosylation site" description="N-linked (GlcNAc...) asparagine" evidence="2">
    <location>
        <position position="389"/>
    </location>
</feature>
<feature type="glycosylation site" description="N-linked (GlcNAc...) asparagine" evidence="2">
    <location>
        <position position="419"/>
    </location>
</feature>
<feature type="glycosylation site" description="N-linked (GlcNAc...) asparagine" evidence="2">
    <location>
        <position position="545"/>
    </location>
</feature>
<feature type="splice variant" id="VSP_008675" description="In isoform 2." evidence="5 6">
    <original>QAPPNTDWRFSQAQRPGTSG</original>
    <variation>VSSFFFFLSFLFLFFVLFCF</variation>
    <location>
        <begin position="809"/>
        <end position="828"/>
    </location>
</feature>
<feature type="splice variant" id="VSP_008676" description="In isoform 2." evidence="5 6">
    <location>
        <begin position="829"/>
        <end position="932"/>
    </location>
</feature>
<feature type="sequence variant" id="VAR_048565" description="In dbSNP:rs17097274.">
    <original>L</original>
    <variation>F</variation>
    <location>
        <position position="791"/>
    </location>
</feature>
<gene>
    <name type="primary">PCDHGA9</name>
</gene>
<name>PCDG9_HUMAN</name>